<organism>
    <name type="scientific">Lysinibacillus sphaericus (strain C3-41)</name>
    <dbReference type="NCBI Taxonomy" id="444177"/>
    <lineage>
        <taxon>Bacteria</taxon>
        <taxon>Bacillati</taxon>
        <taxon>Bacillota</taxon>
        <taxon>Bacilli</taxon>
        <taxon>Bacillales</taxon>
        <taxon>Bacillaceae</taxon>
        <taxon>Lysinibacillus</taxon>
    </lineage>
</organism>
<reference key="1">
    <citation type="journal article" date="2008" name="J. Bacteriol.">
        <title>Complete genome sequence of the mosquitocidal bacterium Bacillus sphaericus C3-41 and comparison with those of closely related Bacillus species.</title>
        <authorList>
            <person name="Hu X."/>
            <person name="Fan W."/>
            <person name="Han B."/>
            <person name="Liu H."/>
            <person name="Zheng D."/>
            <person name="Li Q."/>
            <person name="Dong W."/>
            <person name="Yan J."/>
            <person name="Gao M."/>
            <person name="Berry C."/>
            <person name="Yuan Z."/>
        </authorList>
    </citation>
    <scope>NUCLEOTIDE SEQUENCE [LARGE SCALE GENOMIC DNA]</scope>
    <source>
        <strain>C3-41</strain>
    </source>
</reference>
<proteinExistence type="inferred from homology"/>
<accession>B1HTF0</accession>
<keyword id="KW-0028">Amino-acid biosynthesis</keyword>
<keyword id="KW-0963">Cytoplasm</keyword>
<keyword id="KW-0220">Diaminopimelate biosynthesis</keyword>
<keyword id="KW-0457">Lysine biosynthesis</keyword>
<keyword id="KW-0520">NAD</keyword>
<keyword id="KW-0521">NADP</keyword>
<keyword id="KW-0560">Oxidoreductase</keyword>
<feature type="chain" id="PRO_1000093978" description="4-hydroxy-tetrahydrodipicolinate reductase">
    <location>
        <begin position="1"/>
        <end position="265"/>
    </location>
</feature>
<feature type="active site" description="Proton donor/acceptor" evidence="1">
    <location>
        <position position="155"/>
    </location>
</feature>
<feature type="active site" description="Proton donor" evidence="1">
    <location>
        <position position="159"/>
    </location>
</feature>
<feature type="binding site" evidence="1">
    <location>
        <begin position="9"/>
        <end position="14"/>
    </location>
    <ligand>
        <name>NAD(+)</name>
        <dbReference type="ChEBI" id="CHEBI:57540"/>
    </ligand>
</feature>
<feature type="binding site" evidence="1">
    <location>
        <position position="37"/>
    </location>
    <ligand>
        <name>NADP(+)</name>
        <dbReference type="ChEBI" id="CHEBI:58349"/>
    </ligand>
</feature>
<feature type="binding site" evidence="1">
    <location>
        <begin position="99"/>
        <end position="101"/>
    </location>
    <ligand>
        <name>NAD(+)</name>
        <dbReference type="ChEBI" id="CHEBI:57540"/>
    </ligand>
</feature>
<feature type="binding site" evidence="1">
    <location>
        <begin position="125"/>
        <end position="128"/>
    </location>
    <ligand>
        <name>NAD(+)</name>
        <dbReference type="ChEBI" id="CHEBI:57540"/>
    </ligand>
</feature>
<feature type="binding site" evidence="1">
    <location>
        <position position="156"/>
    </location>
    <ligand>
        <name>(S)-2,3,4,5-tetrahydrodipicolinate</name>
        <dbReference type="ChEBI" id="CHEBI:16845"/>
    </ligand>
</feature>
<feature type="binding site" evidence="1">
    <location>
        <begin position="165"/>
        <end position="166"/>
    </location>
    <ligand>
        <name>(S)-2,3,4,5-tetrahydrodipicolinate</name>
        <dbReference type="ChEBI" id="CHEBI:16845"/>
    </ligand>
</feature>
<evidence type="ECO:0000255" key="1">
    <source>
        <dbReference type="HAMAP-Rule" id="MF_00102"/>
    </source>
</evidence>
<evidence type="ECO:0000305" key="2"/>
<comment type="function">
    <text evidence="1">Catalyzes the conversion of 4-hydroxy-tetrahydrodipicolinate (HTPA) to tetrahydrodipicolinate.</text>
</comment>
<comment type="catalytic activity">
    <reaction evidence="1">
        <text>(S)-2,3,4,5-tetrahydrodipicolinate + NAD(+) + H2O = (2S,4S)-4-hydroxy-2,3,4,5-tetrahydrodipicolinate + NADH + H(+)</text>
        <dbReference type="Rhea" id="RHEA:35323"/>
        <dbReference type="ChEBI" id="CHEBI:15377"/>
        <dbReference type="ChEBI" id="CHEBI:15378"/>
        <dbReference type="ChEBI" id="CHEBI:16845"/>
        <dbReference type="ChEBI" id="CHEBI:57540"/>
        <dbReference type="ChEBI" id="CHEBI:57945"/>
        <dbReference type="ChEBI" id="CHEBI:67139"/>
        <dbReference type="EC" id="1.17.1.8"/>
    </reaction>
</comment>
<comment type="catalytic activity">
    <reaction evidence="1">
        <text>(S)-2,3,4,5-tetrahydrodipicolinate + NADP(+) + H2O = (2S,4S)-4-hydroxy-2,3,4,5-tetrahydrodipicolinate + NADPH + H(+)</text>
        <dbReference type="Rhea" id="RHEA:35331"/>
        <dbReference type="ChEBI" id="CHEBI:15377"/>
        <dbReference type="ChEBI" id="CHEBI:15378"/>
        <dbReference type="ChEBI" id="CHEBI:16845"/>
        <dbReference type="ChEBI" id="CHEBI:57783"/>
        <dbReference type="ChEBI" id="CHEBI:58349"/>
        <dbReference type="ChEBI" id="CHEBI:67139"/>
        <dbReference type="EC" id="1.17.1.8"/>
    </reaction>
</comment>
<comment type="pathway">
    <text evidence="1">Amino-acid biosynthesis; L-lysine biosynthesis via DAP pathway; (S)-tetrahydrodipicolinate from L-aspartate: step 4/4.</text>
</comment>
<comment type="subcellular location">
    <subcellularLocation>
        <location evidence="1">Cytoplasm</location>
    </subcellularLocation>
</comment>
<comment type="similarity">
    <text evidence="1">Belongs to the DapB family.</text>
</comment>
<comment type="caution">
    <text evidence="2">Was originally thought to be a dihydrodipicolinate reductase (DHDPR), catalyzing the conversion of dihydrodipicolinate to tetrahydrodipicolinate. However, it was shown in E.coli that the substrate of the enzymatic reaction is not dihydrodipicolinate (DHDP) but in fact (2S,4S)-4-hydroxy-2,3,4,5-tetrahydrodipicolinic acid (HTPA), the product released by the DapA-catalyzed reaction.</text>
</comment>
<sequence length="265" mass="29105">MSIRVAIAGARGKMGAEAVHTVMKHDKMELVAVLDYKEVGKTLADLDMFPASYTVPIFTEMHDLVEATSPDVLVDLTNPHSVYNHTKEALNLNVRPVIGTTGFTDAQLEELSTIAKEKELGCIIAPNFAIGAILMMKFAKEAAKYLPDVEIIEMHHDHKLDAPSGTAVKTAQLIQEARTQKTQGHPEEKETIEGARGGDFDGMRIHSVRLPGLVAHQQVLFGGDGQLLTIRHDSLNRNSFMSGIAFCVEEVMKMDQLVYGLENII</sequence>
<dbReference type="EC" id="1.17.1.8" evidence="1"/>
<dbReference type="EMBL" id="CP000817">
    <property type="protein sequence ID" value="ACA39566.1"/>
    <property type="molecule type" value="Genomic_DNA"/>
</dbReference>
<dbReference type="RefSeq" id="WP_012293659.1">
    <property type="nucleotide sequence ID" value="NC_010382.1"/>
</dbReference>
<dbReference type="SMR" id="B1HTF0"/>
<dbReference type="EnsemblBacteria" id="ACA39566">
    <property type="protein sequence ID" value="ACA39566"/>
    <property type="gene ID" value="Bsph_1979"/>
</dbReference>
<dbReference type="KEGG" id="lsp:Bsph_1979"/>
<dbReference type="HOGENOM" id="CLU_047479_0_1_9"/>
<dbReference type="UniPathway" id="UPA00034">
    <property type="reaction ID" value="UER00018"/>
</dbReference>
<dbReference type="Proteomes" id="UP000002164">
    <property type="component" value="Chromosome"/>
</dbReference>
<dbReference type="GO" id="GO:0005829">
    <property type="term" value="C:cytosol"/>
    <property type="evidence" value="ECO:0007669"/>
    <property type="project" value="TreeGrafter"/>
</dbReference>
<dbReference type="GO" id="GO:0008839">
    <property type="term" value="F:4-hydroxy-tetrahydrodipicolinate reductase"/>
    <property type="evidence" value="ECO:0007669"/>
    <property type="project" value="UniProtKB-EC"/>
</dbReference>
<dbReference type="GO" id="GO:0051287">
    <property type="term" value="F:NAD binding"/>
    <property type="evidence" value="ECO:0007669"/>
    <property type="project" value="UniProtKB-UniRule"/>
</dbReference>
<dbReference type="GO" id="GO:0050661">
    <property type="term" value="F:NADP binding"/>
    <property type="evidence" value="ECO:0007669"/>
    <property type="project" value="UniProtKB-UniRule"/>
</dbReference>
<dbReference type="GO" id="GO:0016726">
    <property type="term" value="F:oxidoreductase activity, acting on CH or CH2 groups, NAD or NADP as acceptor"/>
    <property type="evidence" value="ECO:0007669"/>
    <property type="project" value="UniProtKB-UniRule"/>
</dbReference>
<dbReference type="GO" id="GO:0019877">
    <property type="term" value="P:diaminopimelate biosynthetic process"/>
    <property type="evidence" value="ECO:0007669"/>
    <property type="project" value="UniProtKB-UniRule"/>
</dbReference>
<dbReference type="GO" id="GO:0009089">
    <property type="term" value="P:lysine biosynthetic process via diaminopimelate"/>
    <property type="evidence" value="ECO:0007669"/>
    <property type="project" value="UniProtKB-UniRule"/>
</dbReference>
<dbReference type="CDD" id="cd02274">
    <property type="entry name" value="DHDPR_N"/>
    <property type="match status" value="1"/>
</dbReference>
<dbReference type="FunFam" id="3.30.360.10:FF:000009">
    <property type="entry name" value="4-hydroxy-tetrahydrodipicolinate reductase"/>
    <property type="match status" value="1"/>
</dbReference>
<dbReference type="Gene3D" id="3.30.360.10">
    <property type="entry name" value="Dihydrodipicolinate Reductase, domain 2"/>
    <property type="match status" value="1"/>
</dbReference>
<dbReference type="Gene3D" id="3.40.50.720">
    <property type="entry name" value="NAD(P)-binding Rossmann-like Domain"/>
    <property type="match status" value="1"/>
</dbReference>
<dbReference type="HAMAP" id="MF_00102">
    <property type="entry name" value="DapB"/>
    <property type="match status" value="1"/>
</dbReference>
<dbReference type="InterPro" id="IPR022663">
    <property type="entry name" value="DapB_C"/>
</dbReference>
<dbReference type="InterPro" id="IPR000846">
    <property type="entry name" value="DapB_N"/>
</dbReference>
<dbReference type="InterPro" id="IPR022664">
    <property type="entry name" value="DapB_N_CS"/>
</dbReference>
<dbReference type="InterPro" id="IPR023940">
    <property type="entry name" value="DHDPR_bac"/>
</dbReference>
<dbReference type="InterPro" id="IPR036291">
    <property type="entry name" value="NAD(P)-bd_dom_sf"/>
</dbReference>
<dbReference type="NCBIfam" id="TIGR00036">
    <property type="entry name" value="dapB"/>
    <property type="match status" value="1"/>
</dbReference>
<dbReference type="PANTHER" id="PTHR20836:SF0">
    <property type="entry name" value="4-HYDROXY-TETRAHYDRODIPICOLINATE REDUCTASE 1, CHLOROPLASTIC-RELATED"/>
    <property type="match status" value="1"/>
</dbReference>
<dbReference type="PANTHER" id="PTHR20836">
    <property type="entry name" value="DIHYDRODIPICOLINATE REDUCTASE"/>
    <property type="match status" value="1"/>
</dbReference>
<dbReference type="Pfam" id="PF05173">
    <property type="entry name" value="DapB_C"/>
    <property type="match status" value="1"/>
</dbReference>
<dbReference type="Pfam" id="PF01113">
    <property type="entry name" value="DapB_N"/>
    <property type="match status" value="1"/>
</dbReference>
<dbReference type="PIRSF" id="PIRSF000161">
    <property type="entry name" value="DHPR"/>
    <property type="match status" value="1"/>
</dbReference>
<dbReference type="SUPFAM" id="SSF55347">
    <property type="entry name" value="Glyceraldehyde-3-phosphate dehydrogenase-like, C-terminal domain"/>
    <property type="match status" value="1"/>
</dbReference>
<dbReference type="SUPFAM" id="SSF51735">
    <property type="entry name" value="NAD(P)-binding Rossmann-fold domains"/>
    <property type="match status" value="1"/>
</dbReference>
<dbReference type="PROSITE" id="PS01298">
    <property type="entry name" value="DAPB"/>
    <property type="match status" value="1"/>
</dbReference>
<name>DAPB_LYSSC</name>
<gene>
    <name evidence="1" type="primary">dapB</name>
    <name type="ordered locus">Bsph_1979</name>
</gene>
<protein>
    <recommendedName>
        <fullName evidence="1">4-hydroxy-tetrahydrodipicolinate reductase</fullName>
        <shortName evidence="1">HTPA reductase</shortName>
        <ecNumber evidence="1">1.17.1.8</ecNumber>
    </recommendedName>
</protein>